<name>RHAA_SALHS</name>
<accession>B4TBY1</accession>
<organism>
    <name type="scientific">Salmonella heidelberg (strain SL476)</name>
    <dbReference type="NCBI Taxonomy" id="454169"/>
    <lineage>
        <taxon>Bacteria</taxon>
        <taxon>Pseudomonadati</taxon>
        <taxon>Pseudomonadota</taxon>
        <taxon>Gammaproteobacteria</taxon>
        <taxon>Enterobacterales</taxon>
        <taxon>Enterobacteriaceae</taxon>
        <taxon>Salmonella</taxon>
    </lineage>
</organism>
<feature type="chain" id="PRO_1000128890" description="L-rhamnose isomerase">
    <location>
        <begin position="1"/>
        <end position="419"/>
    </location>
</feature>
<feature type="binding site" evidence="1">
    <location>
        <position position="262"/>
    </location>
    <ligand>
        <name>Mn(2+)</name>
        <dbReference type="ChEBI" id="CHEBI:29035"/>
    </ligand>
</feature>
<feature type="binding site" evidence="1">
    <location>
        <position position="294"/>
    </location>
    <ligand>
        <name>Mn(2+)</name>
        <dbReference type="ChEBI" id="CHEBI:29035"/>
    </ligand>
</feature>
<feature type="binding site" evidence="1">
    <location>
        <position position="296"/>
    </location>
    <ligand>
        <name>Mn(2+)</name>
        <dbReference type="ChEBI" id="CHEBI:29035"/>
    </ligand>
</feature>
<proteinExistence type="inferred from homology"/>
<comment type="function">
    <text evidence="1">Catalyzes the interconversion of L-rhamnose and L-rhamnulose.</text>
</comment>
<comment type="catalytic activity">
    <reaction evidence="1">
        <text>L-rhamnopyranose = L-rhamnulose</text>
        <dbReference type="Rhea" id="RHEA:23160"/>
        <dbReference type="ChEBI" id="CHEBI:17897"/>
        <dbReference type="ChEBI" id="CHEBI:62346"/>
        <dbReference type="EC" id="5.3.1.14"/>
    </reaction>
</comment>
<comment type="cofactor">
    <cofactor evidence="1">
        <name>Mn(2+)</name>
        <dbReference type="ChEBI" id="CHEBI:29035"/>
    </cofactor>
    <text evidence="1">Binds 1 Mn(2+) ion per subunit.</text>
</comment>
<comment type="pathway">
    <text evidence="1">Carbohydrate degradation; L-rhamnose degradation; glycerone phosphate from L-rhamnose: step 1/3.</text>
</comment>
<comment type="subunit">
    <text evidence="1">Homotetramer.</text>
</comment>
<comment type="subcellular location">
    <subcellularLocation>
        <location evidence="1">Cytoplasm</location>
    </subcellularLocation>
</comment>
<comment type="similarity">
    <text evidence="1">Belongs to the rhamnose isomerase family.</text>
</comment>
<keyword id="KW-0963">Cytoplasm</keyword>
<keyword id="KW-0413">Isomerase</keyword>
<keyword id="KW-0464">Manganese</keyword>
<keyword id="KW-0479">Metal-binding</keyword>
<keyword id="KW-0684">Rhamnose metabolism</keyword>
<evidence type="ECO:0000255" key="1">
    <source>
        <dbReference type="HAMAP-Rule" id="MF_00541"/>
    </source>
</evidence>
<protein>
    <recommendedName>
        <fullName evidence="1">L-rhamnose isomerase</fullName>
        <ecNumber evidence="1">5.3.1.14</ecNumber>
    </recommendedName>
</protein>
<sequence length="419" mass="47457">MTTQLEQAWELAKQRFAAVGIDVEEALRQLDRLPVSMHCWQGDDVAGFENPEGSLTGGIQSTGNYPGKARNATELRADLEQALRLIPGPKRLNLHAIYLESDTPVARDQIKPEHFKNWVEWAKANRLGLDFNPTCFSHPLSADGFTLSHPDAKIRQFWIDHCKASRRVSAYFGEQLGTPSVMNIWIPDGMKDITVDRLAPRQRLLEALDEVISEKFDPAHHIDAVESKLFGIGAESYTVGSNEFYMGYATSRQTALCLDAGHFHPTEVISDKISAAMLYVPRLLLHVSRPVRWDSDHVVLLDDETQAIASEIVRHNLFDRVHIGLDFFDASINRVAAWVIGTRNMKKALLRALLEPTDQLRQLEASGDYTARLALLEEQKSLPWQAVWEMYCQRHDTPTGSQWLDSVRTYEKEILSKRS</sequence>
<dbReference type="EC" id="5.3.1.14" evidence="1"/>
<dbReference type="EMBL" id="CP001120">
    <property type="protein sequence ID" value="ACF68616.1"/>
    <property type="molecule type" value="Genomic_DNA"/>
</dbReference>
<dbReference type="RefSeq" id="WP_000211472.1">
    <property type="nucleotide sequence ID" value="NC_011083.1"/>
</dbReference>
<dbReference type="SMR" id="B4TBY1"/>
<dbReference type="KEGG" id="seh:SeHA_C4375"/>
<dbReference type="HOGENOM" id="CLU_052790_0_0_6"/>
<dbReference type="UniPathway" id="UPA00541">
    <property type="reaction ID" value="UER00601"/>
</dbReference>
<dbReference type="Proteomes" id="UP000001866">
    <property type="component" value="Chromosome"/>
</dbReference>
<dbReference type="GO" id="GO:0005737">
    <property type="term" value="C:cytoplasm"/>
    <property type="evidence" value="ECO:0007669"/>
    <property type="project" value="UniProtKB-SubCell"/>
</dbReference>
<dbReference type="GO" id="GO:0008740">
    <property type="term" value="F:L-rhamnose isomerase activity"/>
    <property type="evidence" value="ECO:0007669"/>
    <property type="project" value="UniProtKB-UniRule"/>
</dbReference>
<dbReference type="GO" id="GO:0030145">
    <property type="term" value="F:manganese ion binding"/>
    <property type="evidence" value="ECO:0007669"/>
    <property type="project" value="UniProtKB-UniRule"/>
</dbReference>
<dbReference type="GO" id="GO:0019324">
    <property type="term" value="P:L-lyxose metabolic process"/>
    <property type="evidence" value="ECO:0007669"/>
    <property type="project" value="TreeGrafter"/>
</dbReference>
<dbReference type="GO" id="GO:0019301">
    <property type="term" value="P:rhamnose catabolic process"/>
    <property type="evidence" value="ECO:0007669"/>
    <property type="project" value="UniProtKB-UniRule"/>
</dbReference>
<dbReference type="FunFam" id="3.20.20.150:FF:000006">
    <property type="entry name" value="L-rhamnose isomerase"/>
    <property type="match status" value="1"/>
</dbReference>
<dbReference type="Gene3D" id="3.20.20.150">
    <property type="entry name" value="Divalent-metal-dependent TIM barrel enzymes"/>
    <property type="match status" value="1"/>
</dbReference>
<dbReference type="HAMAP" id="MF_00541">
    <property type="entry name" value="RhaA"/>
    <property type="match status" value="1"/>
</dbReference>
<dbReference type="InterPro" id="IPR050337">
    <property type="entry name" value="L-rhamnose_isomerase"/>
</dbReference>
<dbReference type="InterPro" id="IPR009308">
    <property type="entry name" value="Rhamnose_isomerase"/>
</dbReference>
<dbReference type="InterPro" id="IPR036237">
    <property type="entry name" value="Xyl_isomerase-like_sf"/>
</dbReference>
<dbReference type="NCBIfam" id="NF002203">
    <property type="entry name" value="PRK01076.1"/>
    <property type="match status" value="1"/>
</dbReference>
<dbReference type="NCBIfam" id="TIGR01748">
    <property type="entry name" value="rhaA"/>
    <property type="match status" value="1"/>
</dbReference>
<dbReference type="PANTHER" id="PTHR30268">
    <property type="entry name" value="L-RHAMNOSE ISOMERASE"/>
    <property type="match status" value="1"/>
</dbReference>
<dbReference type="PANTHER" id="PTHR30268:SF0">
    <property type="entry name" value="L-RHAMNOSE ISOMERASE"/>
    <property type="match status" value="1"/>
</dbReference>
<dbReference type="Pfam" id="PF06134">
    <property type="entry name" value="RhaA"/>
    <property type="match status" value="1"/>
</dbReference>
<dbReference type="SUPFAM" id="SSF51658">
    <property type="entry name" value="Xylose isomerase-like"/>
    <property type="match status" value="1"/>
</dbReference>
<reference key="1">
    <citation type="journal article" date="2011" name="J. Bacteriol.">
        <title>Comparative genomics of 28 Salmonella enterica isolates: evidence for CRISPR-mediated adaptive sublineage evolution.</title>
        <authorList>
            <person name="Fricke W.F."/>
            <person name="Mammel M.K."/>
            <person name="McDermott P.F."/>
            <person name="Tartera C."/>
            <person name="White D.G."/>
            <person name="Leclerc J.E."/>
            <person name="Ravel J."/>
            <person name="Cebula T.A."/>
        </authorList>
    </citation>
    <scope>NUCLEOTIDE SEQUENCE [LARGE SCALE GENOMIC DNA]</scope>
    <source>
        <strain>SL476</strain>
    </source>
</reference>
<gene>
    <name evidence="1" type="primary">rhaA</name>
    <name type="ordered locus">SeHA_C4375</name>
</gene>